<name>TBRG1_RAT</name>
<evidence type="ECO:0000250" key="1"/>
<evidence type="ECO:0000250" key="2">
    <source>
        <dbReference type="UniProtKB" id="Q3UB74"/>
    </source>
</evidence>
<evidence type="ECO:0000250" key="3">
    <source>
        <dbReference type="UniProtKB" id="Q3YBR2"/>
    </source>
</evidence>
<evidence type="ECO:0000255" key="4">
    <source>
        <dbReference type="PROSITE-ProRule" id="PRU00875"/>
    </source>
</evidence>
<evidence type="ECO:0000255" key="5">
    <source>
        <dbReference type="PROSITE-ProRule" id="PRU00876"/>
    </source>
</evidence>
<evidence type="ECO:0000256" key="6">
    <source>
        <dbReference type="SAM" id="MobiDB-lite"/>
    </source>
</evidence>
<evidence type="ECO:0000305" key="7"/>
<organism>
    <name type="scientific">Rattus norvegicus</name>
    <name type="common">Rat</name>
    <dbReference type="NCBI Taxonomy" id="10116"/>
    <lineage>
        <taxon>Eukaryota</taxon>
        <taxon>Metazoa</taxon>
        <taxon>Chordata</taxon>
        <taxon>Craniata</taxon>
        <taxon>Vertebrata</taxon>
        <taxon>Euteleostomi</taxon>
        <taxon>Mammalia</taxon>
        <taxon>Eutheria</taxon>
        <taxon>Euarchontoglires</taxon>
        <taxon>Glires</taxon>
        <taxon>Rodentia</taxon>
        <taxon>Myomorpha</taxon>
        <taxon>Muroidea</taxon>
        <taxon>Muridae</taxon>
        <taxon>Murinae</taxon>
        <taxon>Rattus</taxon>
    </lineage>
</organism>
<accession>Q5PQK8</accession>
<proteinExistence type="evidence at transcript level"/>
<sequence length="406" mass="44785">MSVLSGLASEPRTPLSSKARMKRLPKKNQNEKYRLKYLRLRRAAKATVFENAAVCDEIARLEEKFLKAKEERRYLLKKLLQIHALTEGEPQAAAPSHSSSLPLAYGVTSSVGTIQGAGPSTGAEEPFAKKSKKEKKEKGKENSKLEVLKKTSKRKKMEGGARKLVRPIALDPSGQPVFPIGLGGLTVYSLGEIITNRPGFHDENAIYPVGYCSTRVYASMKCPDQKCLYTCQIKDGGVQPQFEIVPEDDPRNTIVGSSADACYEELLRAISAATGKLMPNPLSCGADFFGFSHPTIHNLIQSCPEAQNCVNYQWVKFDACKPRKGQLSQELPENDAAMSLEAFPTQTFDDDHEDSILPGSLDLPELQHEAFVSSYQPEFLTHEPLVDTDLQHLKSPSQCSPIQSSD</sequence>
<feature type="initiator methionine" description="Removed" evidence="3">
    <location>
        <position position="1"/>
    </location>
</feature>
<feature type="chain" id="PRO_0000274220" description="Transforming growth factor beta regulator 1">
    <location>
        <begin position="2"/>
        <end position="406"/>
    </location>
</feature>
<feature type="domain" description="FYR N-terminal" evidence="4">
    <location>
        <begin position="177"/>
        <end position="236"/>
    </location>
</feature>
<feature type="domain" description="FYR C-terminal" evidence="5">
    <location>
        <begin position="237"/>
        <end position="316"/>
    </location>
</feature>
<feature type="region of interest" description="Disordered" evidence="6">
    <location>
        <begin position="1"/>
        <end position="26"/>
    </location>
</feature>
<feature type="region of interest" description="Disordered" evidence="6">
    <location>
        <begin position="116"/>
        <end position="144"/>
    </location>
</feature>
<feature type="compositionally biased region" description="Basic and acidic residues" evidence="6">
    <location>
        <begin position="134"/>
        <end position="144"/>
    </location>
</feature>
<feature type="modified residue" description="N-acetylserine" evidence="3">
    <location>
        <position position="2"/>
    </location>
</feature>
<feature type="modified residue" description="Phosphothreonine" evidence="2">
    <location>
        <position position="13"/>
    </location>
</feature>
<reference key="1">
    <citation type="journal article" date="2004" name="Genome Res.">
        <title>The status, quality, and expansion of the NIH full-length cDNA project: the Mammalian Gene Collection (MGC).</title>
        <authorList>
            <consortium name="The MGC Project Team"/>
        </authorList>
    </citation>
    <scope>NUCLEOTIDE SEQUENCE [LARGE SCALE MRNA]</scope>
    <source>
        <tissue>Kidney</tissue>
    </source>
</reference>
<comment type="function">
    <text evidence="1">Acts as a growth inhibitor. Can activate p53/TP53, causes G1 arrest and collaborates with CDKN2A to restrict proliferation, but does not require either protein to inhibit DNA synthesis. Redistributes CDKN2A into the nucleoplasm. Involved in maintaining chromosomal stability (By similarity).</text>
</comment>
<comment type="subunit">
    <text evidence="1">Interacts with CDKN2A and MDM2.</text>
</comment>
<comment type="subcellular location">
    <subcellularLocation>
        <location evidence="1">Nucleus</location>
    </subcellularLocation>
</comment>
<comment type="PTM">
    <text evidence="1">Ubiquitinated; mediated by MDM2 and leading to its subsequent proteasomal degradation.</text>
</comment>
<comment type="similarity">
    <text evidence="7">Belongs to the TBRG1 family.</text>
</comment>
<comment type="sequence caution" evidence="7">
    <conflict type="erroneous initiation">
        <sequence resource="EMBL-CDS" id="AAH87142"/>
    </conflict>
</comment>
<keyword id="KW-0007">Acetylation</keyword>
<keyword id="KW-0131">Cell cycle</keyword>
<keyword id="KW-0539">Nucleus</keyword>
<keyword id="KW-0597">Phosphoprotein</keyword>
<keyword id="KW-1185">Reference proteome</keyword>
<keyword id="KW-0043">Tumor suppressor</keyword>
<keyword id="KW-0832">Ubl conjugation</keyword>
<protein>
    <recommendedName>
        <fullName>Transforming growth factor beta regulator 1</fullName>
    </recommendedName>
</protein>
<dbReference type="EMBL" id="BC087142">
    <property type="protein sequence ID" value="AAH87142.1"/>
    <property type="status" value="ALT_INIT"/>
    <property type="molecule type" value="mRNA"/>
</dbReference>
<dbReference type="RefSeq" id="NP_001009344.2">
    <property type="nucleotide sequence ID" value="NM_001009344.2"/>
</dbReference>
<dbReference type="SMR" id="Q5PQK8"/>
<dbReference type="FunCoup" id="Q5PQK8">
    <property type="interactions" value="2330"/>
</dbReference>
<dbReference type="STRING" id="10116.ENSRNOP00000037323"/>
<dbReference type="iPTMnet" id="Q5PQK8"/>
<dbReference type="PhosphoSitePlus" id="Q5PQK8"/>
<dbReference type="PaxDb" id="10116-ENSRNOP00000037323"/>
<dbReference type="Ensembl" id="ENSRNOT00000039729.5">
    <property type="protein sequence ID" value="ENSRNOP00000037323.4"/>
    <property type="gene ID" value="ENSRNOG00000023850.5"/>
</dbReference>
<dbReference type="GeneID" id="300521"/>
<dbReference type="KEGG" id="rno:300521"/>
<dbReference type="UCSC" id="RGD:1305123">
    <property type="organism name" value="rat"/>
</dbReference>
<dbReference type="AGR" id="RGD:1305123"/>
<dbReference type="CTD" id="84897"/>
<dbReference type="RGD" id="1305123">
    <property type="gene designation" value="Tbrg1"/>
</dbReference>
<dbReference type="eggNOG" id="KOG4443">
    <property type="taxonomic scope" value="Eukaryota"/>
</dbReference>
<dbReference type="GeneTree" id="ENSGT00390000013374"/>
<dbReference type="HOGENOM" id="CLU_037126_0_0_1"/>
<dbReference type="InParanoid" id="Q5PQK8"/>
<dbReference type="OMA" id="YYNDYHK"/>
<dbReference type="OrthoDB" id="73472at9989"/>
<dbReference type="PhylomeDB" id="Q5PQK8"/>
<dbReference type="TreeFam" id="TF324736"/>
<dbReference type="PRO" id="PR:Q5PQK8"/>
<dbReference type="Proteomes" id="UP000002494">
    <property type="component" value="Chromosome 8"/>
</dbReference>
<dbReference type="Bgee" id="ENSRNOG00000023850">
    <property type="expression patterns" value="Expressed in ovary and 19 other cell types or tissues"/>
</dbReference>
<dbReference type="GO" id="GO:0005634">
    <property type="term" value="C:nucleus"/>
    <property type="evidence" value="ECO:0000266"/>
    <property type="project" value="RGD"/>
</dbReference>
<dbReference type="GO" id="GO:0006260">
    <property type="term" value="P:DNA replication"/>
    <property type="evidence" value="ECO:0000266"/>
    <property type="project" value="RGD"/>
</dbReference>
<dbReference type="GO" id="GO:0008285">
    <property type="term" value="P:negative regulation of cell population proliferation"/>
    <property type="evidence" value="ECO:0000266"/>
    <property type="project" value="RGD"/>
</dbReference>
<dbReference type="GO" id="GO:1990173">
    <property type="term" value="P:protein localization to nucleoplasm"/>
    <property type="evidence" value="ECO:0000266"/>
    <property type="project" value="RGD"/>
</dbReference>
<dbReference type="GO" id="GO:0050821">
    <property type="term" value="P:protein stabilization"/>
    <property type="evidence" value="ECO:0000266"/>
    <property type="project" value="RGD"/>
</dbReference>
<dbReference type="GO" id="GO:0051726">
    <property type="term" value="P:regulation of cell cycle"/>
    <property type="evidence" value="ECO:0000266"/>
    <property type="project" value="RGD"/>
</dbReference>
<dbReference type="Gene3D" id="3.30.160.360">
    <property type="match status" value="1"/>
</dbReference>
<dbReference type="InterPro" id="IPR003889">
    <property type="entry name" value="FYrich_C"/>
</dbReference>
<dbReference type="InterPro" id="IPR003888">
    <property type="entry name" value="FYrich_N"/>
</dbReference>
<dbReference type="InterPro" id="IPR040092">
    <property type="entry name" value="TBRG1"/>
</dbReference>
<dbReference type="PANTHER" id="PTHR22715">
    <property type="entry name" value="TRANSFORMING GROWTH FACTOR BETA REGULATED GENE 1"/>
    <property type="match status" value="1"/>
</dbReference>
<dbReference type="PANTHER" id="PTHR22715:SF0">
    <property type="entry name" value="TRANSFORMING GROWTH FACTOR BETA REGULATOR 1"/>
    <property type="match status" value="1"/>
</dbReference>
<dbReference type="Pfam" id="PF05965">
    <property type="entry name" value="FYRC"/>
    <property type="match status" value="1"/>
</dbReference>
<dbReference type="Pfam" id="PF05964">
    <property type="entry name" value="FYRN"/>
    <property type="match status" value="1"/>
</dbReference>
<dbReference type="SMART" id="SM00542">
    <property type="entry name" value="FYRC"/>
    <property type="match status" value="1"/>
</dbReference>
<dbReference type="SMART" id="SM00541">
    <property type="entry name" value="FYRN"/>
    <property type="match status" value="1"/>
</dbReference>
<dbReference type="PROSITE" id="PS51543">
    <property type="entry name" value="FYRC"/>
    <property type="match status" value="1"/>
</dbReference>
<dbReference type="PROSITE" id="PS51542">
    <property type="entry name" value="FYRN"/>
    <property type="match status" value="1"/>
</dbReference>
<gene>
    <name type="primary">Tbrg1</name>
</gene>